<gene>
    <name evidence="1" type="primary">cutC</name>
    <name type="ordered locus">plu2101</name>
</gene>
<comment type="subcellular location">
    <subcellularLocation>
        <location evidence="1">Cytoplasm</location>
    </subcellularLocation>
</comment>
<comment type="similarity">
    <text evidence="1">Belongs to the CutC family.</text>
</comment>
<comment type="caution">
    <text evidence="1">Once thought to be involved in copper homeostasis, experiments in E.coli have shown this is not the case.</text>
</comment>
<sequence>MTKLEICCFSVGCALIAQQAGADRIELCASPAEGGLTPSFGTLKQAIEQLTIPVYPIVRPRGGDFCYSHSDFEVMKNDVAQIRDMGFMGVVFGVLDEEGHIDLPRMQQLMALSGDMAVTFHRAFDMCFNPYVALDQLTQLGVKRILTSGQQQNAELGLPLLKELHQASQGPIIMAGAGVRMSNIHKFIDIGLTEVHSSASRIMLSTMTYRKAGVTMSADNEVDEFSHYCVDGGVVEVMKGMLSLTLFE</sequence>
<accession>Q7N557</accession>
<name>CUTC_PHOLL</name>
<protein>
    <recommendedName>
        <fullName evidence="1">PF03932 family protein CutC</fullName>
    </recommendedName>
</protein>
<proteinExistence type="inferred from homology"/>
<organism>
    <name type="scientific">Photorhabdus laumondii subsp. laumondii (strain DSM 15139 / CIP 105565 / TT01)</name>
    <name type="common">Photorhabdus luminescens subsp. laumondii</name>
    <dbReference type="NCBI Taxonomy" id="243265"/>
    <lineage>
        <taxon>Bacteria</taxon>
        <taxon>Pseudomonadati</taxon>
        <taxon>Pseudomonadota</taxon>
        <taxon>Gammaproteobacteria</taxon>
        <taxon>Enterobacterales</taxon>
        <taxon>Morganellaceae</taxon>
        <taxon>Photorhabdus</taxon>
    </lineage>
</organism>
<evidence type="ECO:0000255" key="1">
    <source>
        <dbReference type="HAMAP-Rule" id="MF_00795"/>
    </source>
</evidence>
<reference key="1">
    <citation type="journal article" date="2003" name="Nat. Biotechnol.">
        <title>The genome sequence of the entomopathogenic bacterium Photorhabdus luminescens.</title>
        <authorList>
            <person name="Duchaud E."/>
            <person name="Rusniok C."/>
            <person name="Frangeul L."/>
            <person name="Buchrieser C."/>
            <person name="Givaudan A."/>
            <person name="Taourit S."/>
            <person name="Bocs S."/>
            <person name="Boursaux-Eude C."/>
            <person name="Chandler M."/>
            <person name="Charles J.-F."/>
            <person name="Dassa E."/>
            <person name="Derose R."/>
            <person name="Derzelle S."/>
            <person name="Freyssinet G."/>
            <person name="Gaudriault S."/>
            <person name="Medigue C."/>
            <person name="Lanois A."/>
            <person name="Powell K."/>
            <person name="Siguier P."/>
            <person name="Vincent R."/>
            <person name="Wingate V."/>
            <person name="Zouine M."/>
            <person name="Glaser P."/>
            <person name="Boemare N."/>
            <person name="Danchin A."/>
            <person name="Kunst F."/>
        </authorList>
    </citation>
    <scope>NUCLEOTIDE SEQUENCE [LARGE SCALE GENOMIC DNA]</scope>
    <source>
        <strain>DSM 15139 / CIP 105565 / TT01</strain>
    </source>
</reference>
<keyword id="KW-0963">Cytoplasm</keyword>
<keyword id="KW-1185">Reference proteome</keyword>
<feature type="chain" id="PRO_0000215069" description="PF03932 family protein CutC">
    <location>
        <begin position="1"/>
        <end position="248"/>
    </location>
</feature>
<dbReference type="EMBL" id="BX571866">
    <property type="protein sequence ID" value="CAE14394.1"/>
    <property type="molecule type" value="Genomic_DNA"/>
</dbReference>
<dbReference type="RefSeq" id="WP_011146355.1">
    <property type="nucleotide sequence ID" value="NC_005126.1"/>
</dbReference>
<dbReference type="SMR" id="Q7N557"/>
<dbReference type="STRING" id="243265.plu2101"/>
<dbReference type="GeneID" id="48848380"/>
<dbReference type="KEGG" id="plu:plu2101"/>
<dbReference type="eggNOG" id="COG3142">
    <property type="taxonomic scope" value="Bacteria"/>
</dbReference>
<dbReference type="HOGENOM" id="CLU_050555_3_1_6"/>
<dbReference type="OrthoDB" id="9815677at2"/>
<dbReference type="Proteomes" id="UP000002514">
    <property type="component" value="Chromosome"/>
</dbReference>
<dbReference type="GO" id="GO:0005737">
    <property type="term" value="C:cytoplasm"/>
    <property type="evidence" value="ECO:0007669"/>
    <property type="project" value="UniProtKB-SubCell"/>
</dbReference>
<dbReference type="GO" id="GO:0005507">
    <property type="term" value="F:copper ion binding"/>
    <property type="evidence" value="ECO:0007669"/>
    <property type="project" value="TreeGrafter"/>
</dbReference>
<dbReference type="FunFam" id="3.20.20.380:FF:000001">
    <property type="entry name" value="Copper homeostasis protein CutC"/>
    <property type="match status" value="1"/>
</dbReference>
<dbReference type="Gene3D" id="3.20.20.380">
    <property type="entry name" value="Copper homeostasis (CutC) domain"/>
    <property type="match status" value="1"/>
</dbReference>
<dbReference type="HAMAP" id="MF_00795">
    <property type="entry name" value="CutC"/>
    <property type="match status" value="1"/>
</dbReference>
<dbReference type="InterPro" id="IPR005627">
    <property type="entry name" value="CutC-like"/>
</dbReference>
<dbReference type="InterPro" id="IPR036822">
    <property type="entry name" value="CutC-like_dom_sf"/>
</dbReference>
<dbReference type="NCBIfam" id="NF008603">
    <property type="entry name" value="PRK11572.1"/>
    <property type="match status" value="1"/>
</dbReference>
<dbReference type="PANTHER" id="PTHR12598">
    <property type="entry name" value="COPPER HOMEOSTASIS PROTEIN CUTC"/>
    <property type="match status" value="1"/>
</dbReference>
<dbReference type="PANTHER" id="PTHR12598:SF0">
    <property type="entry name" value="COPPER HOMEOSTASIS PROTEIN CUTC HOMOLOG"/>
    <property type="match status" value="1"/>
</dbReference>
<dbReference type="Pfam" id="PF03932">
    <property type="entry name" value="CutC"/>
    <property type="match status" value="1"/>
</dbReference>
<dbReference type="SUPFAM" id="SSF110395">
    <property type="entry name" value="CutC-like"/>
    <property type="match status" value="1"/>
</dbReference>